<organism>
    <name type="scientific">Nitrosomonas eutropha (strain DSM 101675 / C91 / Nm57)</name>
    <dbReference type="NCBI Taxonomy" id="335283"/>
    <lineage>
        <taxon>Bacteria</taxon>
        <taxon>Pseudomonadati</taxon>
        <taxon>Pseudomonadota</taxon>
        <taxon>Betaproteobacteria</taxon>
        <taxon>Nitrosomonadales</taxon>
        <taxon>Nitrosomonadaceae</taxon>
        <taxon>Nitrosomonas</taxon>
    </lineage>
</organism>
<gene>
    <name evidence="1" type="primary">rpsS</name>
    <name type="ordered locus">Neut_0562</name>
</gene>
<protein>
    <recommendedName>
        <fullName evidence="1">Small ribosomal subunit protein uS19</fullName>
    </recommendedName>
    <alternativeName>
        <fullName evidence="2">30S ribosomal protein S19</fullName>
    </alternativeName>
</protein>
<sequence>MSRSISKGPFVDLHLINKVIVVRKNNDKRPIKTWSRRSTILPDFIGLTISVHNGRQHIPIFITENMVGHKLGEFSHTRTFKGHAGDKKAAGSKR</sequence>
<proteinExistence type="inferred from homology"/>
<feature type="chain" id="PRO_1000051086" description="Small ribosomal subunit protein uS19">
    <location>
        <begin position="1"/>
        <end position="94"/>
    </location>
</feature>
<name>RS19_NITEC</name>
<dbReference type="EMBL" id="CP000450">
    <property type="protein sequence ID" value="ABI58835.1"/>
    <property type="molecule type" value="Genomic_DNA"/>
</dbReference>
<dbReference type="RefSeq" id="WP_011633677.1">
    <property type="nucleotide sequence ID" value="NC_008344.1"/>
</dbReference>
<dbReference type="SMR" id="Q0AIJ1"/>
<dbReference type="STRING" id="335283.Neut_0562"/>
<dbReference type="KEGG" id="net:Neut_0562"/>
<dbReference type="eggNOG" id="COG0185">
    <property type="taxonomic scope" value="Bacteria"/>
</dbReference>
<dbReference type="HOGENOM" id="CLU_144911_0_1_4"/>
<dbReference type="OrthoDB" id="9797833at2"/>
<dbReference type="Proteomes" id="UP000001966">
    <property type="component" value="Chromosome"/>
</dbReference>
<dbReference type="GO" id="GO:0005737">
    <property type="term" value="C:cytoplasm"/>
    <property type="evidence" value="ECO:0007669"/>
    <property type="project" value="UniProtKB-ARBA"/>
</dbReference>
<dbReference type="GO" id="GO:0015935">
    <property type="term" value="C:small ribosomal subunit"/>
    <property type="evidence" value="ECO:0007669"/>
    <property type="project" value="InterPro"/>
</dbReference>
<dbReference type="GO" id="GO:0019843">
    <property type="term" value="F:rRNA binding"/>
    <property type="evidence" value="ECO:0007669"/>
    <property type="project" value="UniProtKB-UniRule"/>
</dbReference>
<dbReference type="GO" id="GO:0003735">
    <property type="term" value="F:structural constituent of ribosome"/>
    <property type="evidence" value="ECO:0007669"/>
    <property type="project" value="InterPro"/>
</dbReference>
<dbReference type="GO" id="GO:0000028">
    <property type="term" value="P:ribosomal small subunit assembly"/>
    <property type="evidence" value="ECO:0007669"/>
    <property type="project" value="TreeGrafter"/>
</dbReference>
<dbReference type="GO" id="GO:0006412">
    <property type="term" value="P:translation"/>
    <property type="evidence" value="ECO:0007669"/>
    <property type="project" value="UniProtKB-UniRule"/>
</dbReference>
<dbReference type="FunFam" id="3.30.860.10:FF:000001">
    <property type="entry name" value="30S ribosomal protein S19"/>
    <property type="match status" value="1"/>
</dbReference>
<dbReference type="Gene3D" id="3.30.860.10">
    <property type="entry name" value="30s Ribosomal Protein S19, Chain A"/>
    <property type="match status" value="1"/>
</dbReference>
<dbReference type="HAMAP" id="MF_00531">
    <property type="entry name" value="Ribosomal_uS19"/>
    <property type="match status" value="1"/>
</dbReference>
<dbReference type="InterPro" id="IPR002222">
    <property type="entry name" value="Ribosomal_uS19"/>
</dbReference>
<dbReference type="InterPro" id="IPR005732">
    <property type="entry name" value="Ribosomal_uS19_bac-type"/>
</dbReference>
<dbReference type="InterPro" id="IPR020934">
    <property type="entry name" value="Ribosomal_uS19_CS"/>
</dbReference>
<dbReference type="InterPro" id="IPR023575">
    <property type="entry name" value="Ribosomal_uS19_SF"/>
</dbReference>
<dbReference type="NCBIfam" id="TIGR01050">
    <property type="entry name" value="rpsS_bact"/>
    <property type="match status" value="1"/>
</dbReference>
<dbReference type="PANTHER" id="PTHR11880">
    <property type="entry name" value="RIBOSOMAL PROTEIN S19P FAMILY MEMBER"/>
    <property type="match status" value="1"/>
</dbReference>
<dbReference type="PANTHER" id="PTHR11880:SF8">
    <property type="entry name" value="SMALL RIBOSOMAL SUBUNIT PROTEIN US19M"/>
    <property type="match status" value="1"/>
</dbReference>
<dbReference type="Pfam" id="PF00203">
    <property type="entry name" value="Ribosomal_S19"/>
    <property type="match status" value="1"/>
</dbReference>
<dbReference type="PIRSF" id="PIRSF002144">
    <property type="entry name" value="Ribosomal_S19"/>
    <property type="match status" value="1"/>
</dbReference>
<dbReference type="PRINTS" id="PR00975">
    <property type="entry name" value="RIBOSOMALS19"/>
</dbReference>
<dbReference type="SUPFAM" id="SSF54570">
    <property type="entry name" value="Ribosomal protein S19"/>
    <property type="match status" value="1"/>
</dbReference>
<dbReference type="PROSITE" id="PS00323">
    <property type="entry name" value="RIBOSOMAL_S19"/>
    <property type="match status" value="1"/>
</dbReference>
<comment type="function">
    <text evidence="1">Protein S19 forms a complex with S13 that binds strongly to the 16S ribosomal RNA.</text>
</comment>
<comment type="similarity">
    <text evidence="1">Belongs to the universal ribosomal protein uS19 family.</text>
</comment>
<evidence type="ECO:0000255" key="1">
    <source>
        <dbReference type="HAMAP-Rule" id="MF_00531"/>
    </source>
</evidence>
<evidence type="ECO:0000305" key="2"/>
<accession>Q0AIJ1</accession>
<keyword id="KW-0687">Ribonucleoprotein</keyword>
<keyword id="KW-0689">Ribosomal protein</keyword>
<keyword id="KW-0694">RNA-binding</keyword>
<keyword id="KW-0699">rRNA-binding</keyword>
<reference key="1">
    <citation type="journal article" date="2007" name="Environ. Microbiol.">
        <title>Whole-genome analysis of the ammonia-oxidizing bacterium, Nitrosomonas eutropha C91: implications for niche adaptation.</title>
        <authorList>
            <person name="Stein L.Y."/>
            <person name="Arp D.J."/>
            <person name="Berube P.M."/>
            <person name="Chain P.S."/>
            <person name="Hauser L."/>
            <person name="Jetten M.S."/>
            <person name="Klotz M.G."/>
            <person name="Larimer F.W."/>
            <person name="Norton J.M."/>
            <person name="Op den Camp H.J.M."/>
            <person name="Shin M."/>
            <person name="Wei X."/>
        </authorList>
    </citation>
    <scope>NUCLEOTIDE SEQUENCE [LARGE SCALE GENOMIC DNA]</scope>
    <source>
        <strain>DSM 101675 / C91 / Nm57</strain>
    </source>
</reference>